<name>BIOB_STAAN</name>
<feature type="chain" id="PRO_0000381651" description="Biotin synthase">
    <location>
        <begin position="1"/>
        <end position="335"/>
    </location>
</feature>
<feature type="domain" description="Radical SAM core" evidence="2">
    <location>
        <begin position="43"/>
        <end position="269"/>
    </location>
</feature>
<feature type="binding site" evidence="1">
    <location>
        <position position="61"/>
    </location>
    <ligand>
        <name>[4Fe-4S] cluster</name>
        <dbReference type="ChEBI" id="CHEBI:49883"/>
        <note>4Fe-4S-S-AdoMet</note>
    </ligand>
</feature>
<feature type="binding site" evidence="1">
    <location>
        <position position="65"/>
    </location>
    <ligand>
        <name>[4Fe-4S] cluster</name>
        <dbReference type="ChEBI" id="CHEBI:49883"/>
        <note>4Fe-4S-S-AdoMet</note>
    </ligand>
</feature>
<feature type="binding site" evidence="1">
    <location>
        <position position="68"/>
    </location>
    <ligand>
        <name>[4Fe-4S] cluster</name>
        <dbReference type="ChEBI" id="CHEBI:49883"/>
        <note>4Fe-4S-S-AdoMet</note>
    </ligand>
</feature>
<feature type="binding site" evidence="1">
    <location>
        <position position="104"/>
    </location>
    <ligand>
        <name>[2Fe-2S] cluster</name>
        <dbReference type="ChEBI" id="CHEBI:190135"/>
    </ligand>
</feature>
<feature type="binding site" evidence="1">
    <location>
        <position position="137"/>
    </location>
    <ligand>
        <name>[2Fe-2S] cluster</name>
        <dbReference type="ChEBI" id="CHEBI:190135"/>
    </ligand>
</feature>
<feature type="binding site" evidence="1">
    <location>
        <position position="197"/>
    </location>
    <ligand>
        <name>[2Fe-2S] cluster</name>
        <dbReference type="ChEBI" id="CHEBI:190135"/>
    </ligand>
</feature>
<feature type="binding site" evidence="1">
    <location>
        <position position="267"/>
    </location>
    <ligand>
        <name>[2Fe-2S] cluster</name>
        <dbReference type="ChEBI" id="CHEBI:190135"/>
    </ligand>
</feature>
<keyword id="KW-0001">2Fe-2S</keyword>
<keyword id="KW-0004">4Fe-4S</keyword>
<keyword id="KW-0093">Biotin biosynthesis</keyword>
<keyword id="KW-0408">Iron</keyword>
<keyword id="KW-0411">Iron-sulfur</keyword>
<keyword id="KW-0479">Metal-binding</keyword>
<keyword id="KW-0949">S-adenosyl-L-methionine</keyword>
<keyword id="KW-0808">Transferase</keyword>
<gene>
    <name evidence="1" type="primary">bioB</name>
    <name type="ordered locus">SA2213</name>
</gene>
<accession>Q7A3R9</accession>
<sequence>MNLAKRILQGEQLTKETVLKIYEDTNIDTLDLLNEAYILRKHYFGKKVKLNMILNAKSGICPENCGYCGQSRDIKQKQRYALIPEEQIIDGAKVAHDNHIGTYCIVMSGRGPSDKEVDHISNTVRTIKSQHPQLKICACLGLTNDEQAKKLKSAGVDRYNHNINTSENYHDNVVTTHSYKDRTDTIELMKANNISPCSGVICGMGESNQDIVDMAFALKEMDADSIPINFLHPIKGTKFGSMDDLTPMKCLRIVALFRLINPTKEIRIAGGREVNLRSLQPLALKAANSIFVGDYLITGGQPNQLDYDMINDLGFEIDYDTCENKENKNDVSRAN</sequence>
<protein>
    <recommendedName>
        <fullName evidence="1">Biotin synthase</fullName>
        <ecNumber evidence="1">2.8.1.6</ecNumber>
    </recommendedName>
</protein>
<evidence type="ECO:0000255" key="1">
    <source>
        <dbReference type="HAMAP-Rule" id="MF_01694"/>
    </source>
</evidence>
<evidence type="ECO:0000255" key="2">
    <source>
        <dbReference type="PROSITE-ProRule" id="PRU01266"/>
    </source>
</evidence>
<comment type="function">
    <text evidence="1">Catalyzes the conversion of dethiobiotin (DTB) to biotin by the insertion of a sulfur atom into dethiobiotin via a radical-based mechanism.</text>
</comment>
<comment type="catalytic activity">
    <reaction evidence="1">
        <text>(4R,5S)-dethiobiotin + (sulfur carrier)-SH + 2 reduced [2Fe-2S]-[ferredoxin] + 2 S-adenosyl-L-methionine = (sulfur carrier)-H + biotin + 2 5'-deoxyadenosine + 2 L-methionine + 2 oxidized [2Fe-2S]-[ferredoxin]</text>
        <dbReference type="Rhea" id="RHEA:22060"/>
        <dbReference type="Rhea" id="RHEA-COMP:10000"/>
        <dbReference type="Rhea" id="RHEA-COMP:10001"/>
        <dbReference type="Rhea" id="RHEA-COMP:14737"/>
        <dbReference type="Rhea" id="RHEA-COMP:14739"/>
        <dbReference type="ChEBI" id="CHEBI:17319"/>
        <dbReference type="ChEBI" id="CHEBI:29917"/>
        <dbReference type="ChEBI" id="CHEBI:33737"/>
        <dbReference type="ChEBI" id="CHEBI:33738"/>
        <dbReference type="ChEBI" id="CHEBI:57586"/>
        <dbReference type="ChEBI" id="CHEBI:57844"/>
        <dbReference type="ChEBI" id="CHEBI:59789"/>
        <dbReference type="ChEBI" id="CHEBI:64428"/>
        <dbReference type="ChEBI" id="CHEBI:149473"/>
        <dbReference type="EC" id="2.8.1.6"/>
    </reaction>
</comment>
<comment type="cofactor">
    <cofactor evidence="1">
        <name>[4Fe-4S] cluster</name>
        <dbReference type="ChEBI" id="CHEBI:49883"/>
    </cofactor>
    <text evidence="1">Binds 1 [4Fe-4S] cluster. The cluster is coordinated with 3 cysteines and an exchangeable S-adenosyl-L-methionine.</text>
</comment>
<comment type="cofactor">
    <cofactor evidence="1">
        <name>[2Fe-2S] cluster</name>
        <dbReference type="ChEBI" id="CHEBI:190135"/>
    </cofactor>
    <text evidence="1">Binds 1 [2Fe-2S] cluster. The cluster is coordinated with 3 cysteines and 1 arginine.</text>
</comment>
<comment type="pathway">
    <text evidence="1">Cofactor biosynthesis; biotin biosynthesis; biotin from 7,8-diaminononanoate: step 2/2.</text>
</comment>
<comment type="subunit">
    <text evidence="1">Homodimer.</text>
</comment>
<comment type="similarity">
    <text evidence="1">Belongs to the radical SAM superfamily. Biotin synthase family.</text>
</comment>
<dbReference type="EC" id="2.8.1.6" evidence="1"/>
<dbReference type="EMBL" id="BA000018">
    <property type="protein sequence ID" value="BAB43515.1"/>
    <property type="molecule type" value="Genomic_DNA"/>
</dbReference>
<dbReference type="PIR" id="B90044">
    <property type="entry name" value="B90044"/>
</dbReference>
<dbReference type="RefSeq" id="WP_001046645.1">
    <property type="nucleotide sequence ID" value="NC_002745.2"/>
</dbReference>
<dbReference type="SMR" id="Q7A3R9"/>
<dbReference type="EnsemblBacteria" id="BAB43515">
    <property type="protein sequence ID" value="BAB43515"/>
    <property type="gene ID" value="BAB43515"/>
</dbReference>
<dbReference type="KEGG" id="sau:SA2213"/>
<dbReference type="HOGENOM" id="CLU_033172_2_1_9"/>
<dbReference type="UniPathway" id="UPA00078">
    <property type="reaction ID" value="UER00162"/>
</dbReference>
<dbReference type="GO" id="GO:0051537">
    <property type="term" value="F:2 iron, 2 sulfur cluster binding"/>
    <property type="evidence" value="ECO:0007669"/>
    <property type="project" value="UniProtKB-KW"/>
</dbReference>
<dbReference type="GO" id="GO:0051539">
    <property type="term" value="F:4 iron, 4 sulfur cluster binding"/>
    <property type="evidence" value="ECO:0007669"/>
    <property type="project" value="UniProtKB-KW"/>
</dbReference>
<dbReference type="GO" id="GO:0004076">
    <property type="term" value="F:biotin synthase activity"/>
    <property type="evidence" value="ECO:0007669"/>
    <property type="project" value="UniProtKB-UniRule"/>
</dbReference>
<dbReference type="GO" id="GO:0005506">
    <property type="term" value="F:iron ion binding"/>
    <property type="evidence" value="ECO:0007669"/>
    <property type="project" value="UniProtKB-UniRule"/>
</dbReference>
<dbReference type="GO" id="GO:0009102">
    <property type="term" value="P:biotin biosynthetic process"/>
    <property type="evidence" value="ECO:0007669"/>
    <property type="project" value="UniProtKB-UniRule"/>
</dbReference>
<dbReference type="CDD" id="cd01335">
    <property type="entry name" value="Radical_SAM"/>
    <property type="match status" value="1"/>
</dbReference>
<dbReference type="FunFam" id="3.20.20.70:FF:000026">
    <property type="entry name" value="Biotin synthase"/>
    <property type="match status" value="1"/>
</dbReference>
<dbReference type="Gene3D" id="3.20.20.70">
    <property type="entry name" value="Aldolase class I"/>
    <property type="match status" value="1"/>
</dbReference>
<dbReference type="HAMAP" id="MF_01694">
    <property type="entry name" value="BioB"/>
    <property type="match status" value="1"/>
</dbReference>
<dbReference type="InterPro" id="IPR013785">
    <property type="entry name" value="Aldolase_TIM"/>
</dbReference>
<dbReference type="InterPro" id="IPR010722">
    <property type="entry name" value="BATS_dom"/>
</dbReference>
<dbReference type="InterPro" id="IPR002684">
    <property type="entry name" value="Biotin_synth/BioAB"/>
</dbReference>
<dbReference type="InterPro" id="IPR024177">
    <property type="entry name" value="Biotin_synthase"/>
</dbReference>
<dbReference type="InterPro" id="IPR006638">
    <property type="entry name" value="Elp3/MiaA/NifB-like_rSAM"/>
</dbReference>
<dbReference type="InterPro" id="IPR007197">
    <property type="entry name" value="rSAM"/>
</dbReference>
<dbReference type="NCBIfam" id="TIGR00433">
    <property type="entry name" value="bioB"/>
    <property type="match status" value="1"/>
</dbReference>
<dbReference type="PANTHER" id="PTHR22976">
    <property type="entry name" value="BIOTIN SYNTHASE"/>
    <property type="match status" value="1"/>
</dbReference>
<dbReference type="PANTHER" id="PTHR22976:SF2">
    <property type="entry name" value="BIOTIN SYNTHASE, MITOCHONDRIAL"/>
    <property type="match status" value="1"/>
</dbReference>
<dbReference type="Pfam" id="PF06968">
    <property type="entry name" value="BATS"/>
    <property type="match status" value="1"/>
</dbReference>
<dbReference type="Pfam" id="PF04055">
    <property type="entry name" value="Radical_SAM"/>
    <property type="match status" value="1"/>
</dbReference>
<dbReference type="PIRSF" id="PIRSF001619">
    <property type="entry name" value="Biotin_synth"/>
    <property type="match status" value="1"/>
</dbReference>
<dbReference type="SFLD" id="SFLDG01060">
    <property type="entry name" value="BATS_domain_containing"/>
    <property type="match status" value="1"/>
</dbReference>
<dbReference type="SFLD" id="SFLDG01278">
    <property type="entry name" value="biotin_synthase_like"/>
    <property type="match status" value="1"/>
</dbReference>
<dbReference type="SMART" id="SM00876">
    <property type="entry name" value="BATS"/>
    <property type="match status" value="1"/>
</dbReference>
<dbReference type="SMART" id="SM00729">
    <property type="entry name" value="Elp3"/>
    <property type="match status" value="1"/>
</dbReference>
<dbReference type="SUPFAM" id="SSF102114">
    <property type="entry name" value="Radical SAM enzymes"/>
    <property type="match status" value="1"/>
</dbReference>
<dbReference type="PROSITE" id="PS51918">
    <property type="entry name" value="RADICAL_SAM"/>
    <property type="match status" value="1"/>
</dbReference>
<organism>
    <name type="scientific">Staphylococcus aureus (strain N315)</name>
    <dbReference type="NCBI Taxonomy" id="158879"/>
    <lineage>
        <taxon>Bacteria</taxon>
        <taxon>Bacillati</taxon>
        <taxon>Bacillota</taxon>
        <taxon>Bacilli</taxon>
        <taxon>Bacillales</taxon>
        <taxon>Staphylococcaceae</taxon>
        <taxon>Staphylococcus</taxon>
    </lineage>
</organism>
<reference key="1">
    <citation type="journal article" date="2001" name="Lancet">
        <title>Whole genome sequencing of meticillin-resistant Staphylococcus aureus.</title>
        <authorList>
            <person name="Kuroda M."/>
            <person name="Ohta T."/>
            <person name="Uchiyama I."/>
            <person name="Baba T."/>
            <person name="Yuzawa H."/>
            <person name="Kobayashi I."/>
            <person name="Cui L."/>
            <person name="Oguchi A."/>
            <person name="Aoki K."/>
            <person name="Nagai Y."/>
            <person name="Lian J.-Q."/>
            <person name="Ito T."/>
            <person name="Kanamori M."/>
            <person name="Matsumaru H."/>
            <person name="Maruyama A."/>
            <person name="Murakami H."/>
            <person name="Hosoyama A."/>
            <person name="Mizutani-Ui Y."/>
            <person name="Takahashi N.K."/>
            <person name="Sawano T."/>
            <person name="Inoue R."/>
            <person name="Kaito C."/>
            <person name="Sekimizu K."/>
            <person name="Hirakawa H."/>
            <person name="Kuhara S."/>
            <person name="Goto S."/>
            <person name="Yabuzaki J."/>
            <person name="Kanehisa M."/>
            <person name="Yamashita A."/>
            <person name="Oshima K."/>
            <person name="Furuya K."/>
            <person name="Yoshino C."/>
            <person name="Shiba T."/>
            <person name="Hattori M."/>
            <person name="Ogasawara N."/>
            <person name="Hayashi H."/>
            <person name="Hiramatsu K."/>
        </authorList>
    </citation>
    <scope>NUCLEOTIDE SEQUENCE [LARGE SCALE GENOMIC DNA]</scope>
    <source>
        <strain>N315</strain>
    </source>
</reference>
<reference key="2">
    <citation type="submission" date="2007-10" db="UniProtKB">
        <title>Shotgun proteomic analysis of total and membrane protein extracts of S. aureus strain N315.</title>
        <authorList>
            <person name="Vaezzadeh A.R."/>
            <person name="Deshusses J."/>
            <person name="Lescuyer P."/>
            <person name="Hochstrasser D.F."/>
        </authorList>
    </citation>
    <scope>IDENTIFICATION BY MASS SPECTROMETRY [LARGE SCALE ANALYSIS]</scope>
    <source>
        <strain>N315</strain>
    </source>
</reference>
<proteinExistence type="evidence at protein level"/>